<protein>
    <recommendedName>
        <fullName evidence="2">tRNA (guanine-N(7)-)-methyltransferase</fullName>
        <ecNumber evidence="2">2.1.1.33</ecNumber>
    </recommendedName>
    <alternativeName>
        <fullName evidence="2">tRNA (guanine(46)-N(7))-methyltransferase</fullName>
    </alternativeName>
    <alternativeName>
        <fullName evidence="2">tRNA(m7G46)-methyltransferase</fullName>
    </alternativeName>
</protein>
<organism>
    <name type="scientific">Pseudomonas syringae pv. syringae (strain B728a)</name>
    <dbReference type="NCBI Taxonomy" id="205918"/>
    <lineage>
        <taxon>Bacteria</taxon>
        <taxon>Pseudomonadati</taxon>
        <taxon>Pseudomonadota</taxon>
        <taxon>Gammaproteobacteria</taxon>
        <taxon>Pseudomonadales</taxon>
        <taxon>Pseudomonadaceae</taxon>
        <taxon>Pseudomonas</taxon>
        <taxon>Pseudomonas syringae</taxon>
    </lineage>
</organism>
<accession>Q4ZM56</accession>
<gene>
    <name evidence="2" type="primary">trmB</name>
    <name type="ordered locus">Psyr_4739</name>
</gene>
<comment type="function">
    <text evidence="2">Catalyzes the formation of N(7)-methylguanine at position 46 (m7G46) in tRNA.</text>
</comment>
<comment type="catalytic activity">
    <reaction evidence="2">
        <text>guanosine(46) in tRNA + S-adenosyl-L-methionine = N(7)-methylguanosine(46) in tRNA + S-adenosyl-L-homocysteine</text>
        <dbReference type="Rhea" id="RHEA:42708"/>
        <dbReference type="Rhea" id="RHEA-COMP:10188"/>
        <dbReference type="Rhea" id="RHEA-COMP:10189"/>
        <dbReference type="ChEBI" id="CHEBI:57856"/>
        <dbReference type="ChEBI" id="CHEBI:59789"/>
        <dbReference type="ChEBI" id="CHEBI:74269"/>
        <dbReference type="ChEBI" id="CHEBI:74480"/>
        <dbReference type="EC" id="2.1.1.33"/>
    </reaction>
</comment>
<comment type="pathway">
    <text evidence="2">tRNA modification; N(7)-methylguanine-tRNA biosynthesis.</text>
</comment>
<comment type="similarity">
    <text evidence="2">Belongs to the class I-like SAM-binding methyltransferase superfamily. TrmB family.</text>
</comment>
<sequence>MTDSHVPHPESPAVEEGEERPHRRIKSFVMRAGRMTEGQQRGLDQGLPLYGLSLTDTPVDFDQVFGRSAPRTLEIGFGMGHSLLEMAAAAPEHDFIGVEVHSPGVGALLNGVLTQGLTNVRVYDCDAIEVLNRCVADNSLDRLMLFFPDPWHKSRHHKRRIVQPEFAALVRSKLKVGGVFHMATDWGPYAEYMLEVMSVAPGYRNQAEDNQYVPRPAERPITKFERRGEKLGHGVWDLKFEKVD</sequence>
<feature type="chain" id="PRO_0000229188" description="tRNA (guanine-N(7)-)-methyltransferase">
    <location>
        <begin position="1"/>
        <end position="244"/>
    </location>
</feature>
<feature type="region of interest" description="Disordered" evidence="3">
    <location>
        <begin position="1"/>
        <end position="24"/>
    </location>
</feature>
<feature type="active site" evidence="1">
    <location>
        <position position="149"/>
    </location>
</feature>
<feature type="binding site" evidence="2">
    <location>
        <position position="74"/>
    </location>
    <ligand>
        <name>S-adenosyl-L-methionine</name>
        <dbReference type="ChEBI" id="CHEBI:59789"/>
    </ligand>
</feature>
<feature type="binding site" evidence="2">
    <location>
        <position position="99"/>
    </location>
    <ligand>
        <name>S-adenosyl-L-methionine</name>
        <dbReference type="ChEBI" id="CHEBI:59789"/>
    </ligand>
</feature>
<feature type="binding site" evidence="2">
    <location>
        <position position="126"/>
    </location>
    <ligand>
        <name>S-adenosyl-L-methionine</name>
        <dbReference type="ChEBI" id="CHEBI:59789"/>
    </ligand>
</feature>
<feature type="binding site" evidence="2">
    <location>
        <position position="149"/>
    </location>
    <ligand>
        <name>S-adenosyl-L-methionine</name>
        <dbReference type="ChEBI" id="CHEBI:59789"/>
    </ligand>
</feature>
<feature type="binding site" evidence="2">
    <location>
        <position position="153"/>
    </location>
    <ligand>
        <name>substrate</name>
    </ligand>
</feature>
<feature type="binding site" evidence="2">
    <location>
        <position position="185"/>
    </location>
    <ligand>
        <name>substrate</name>
    </ligand>
</feature>
<feature type="binding site" evidence="2">
    <location>
        <begin position="222"/>
        <end position="225"/>
    </location>
    <ligand>
        <name>substrate</name>
    </ligand>
</feature>
<dbReference type="EC" id="2.1.1.33" evidence="2"/>
<dbReference type="EMBL" id="CP000075">
    <property type="protein sequence ID" value="AAY39766.1"/>
    <property type="molecule type" value="Genomic_DNA"/>
</dbReference>
<dbReference type="RefSeq" id="YP_237804.1">
    <property type="nucleotide sequence ID" value="NC_007005.1"/>
</dbReference>
<dbReference type="SMR" id="Q4ZM56"/>
<dbReference type="STRING" id="205918.Psyr_4739"/>
<dbReference type="KEGG" id="psb:Psyr_4739"/>
<dbReference type="PATRIC" id="fig|205918.7.peg.4888"/>
<dbReference type="eggNOG" id="COG0220">
    <property type="taxonomic scope" value="Bacteria"/>
</dbReference>
<dbReference type="HOGENOM" id="CLU_050910_0_1_6"/>
<dbReference type="OrthoDB" id="9802090at2"/>
<dbReference type="UniPathway" id="UPA00989"/>
<dbReference type="Proteomes" id="UP000000426">
    <property type="component" value="Chromosome"/>
</dbReference>
<dbReference type="GO" id="GO:0043527">
    <property type="term" value="C:tRNA methyltransferase complex"/>
    <property type="evidence" value="ECO:0007669"/>
    <property type="project" value="TreeGrafter"/>
</dbReference>
<dbReference type="GO" id="GO:0008176">
    <property type="term" value="F:tRNA (guanine(46)-N7)-methyltransferase activity"/>
    <property type="evidence" value="ECO:0007669"/>
    <property type="project" value="UniProtKB-UniRule"/>
</dbReference>
<dbReference type="CDD" id="cd02440">
    <property type="entry name" value="AdoMet_MTases"/>
    <property type="match status" value="1"/>
</dbReference>
<dbReference type="FunFam" id="3.40.50.150:FF:000035">
    <property type="entry name" value="tRNA (guanine-N(7)-)-methyltransferase"/>
    <property type="match status" value="1"/>
</dbReference>
<dbReference type="Gene3D" id="3.40.50.150">
    <property type="entry name" value="Vaccinia Virus protein VP39"/>
    <property type="match status" value="1"/>
</dbReference>
<dbReference type="HAMAP" id="MF_01057">
    <property type="entry name" value="tRNA_methyltr_TrmB"/>
    <property type="match status" value="1"/>
</dbReference>
<dbReference type="InterPro" id="IPR029063">
    <property type="entry name" value="SAM-dependent_MTases_sf"/>
</dbReference>
<dbReference type="InterPro" id="IPR003358">
    <property type="entry name" value="tRNA_(Gua-N-7)_MeTrfase_Trmb"/>
</dbReference>
<dbReference type="InterPro" id="IPR055361">
    <property type="entry name" value="tRNA_methyltr_TrmB_bact"/>
</dbReference>
<dbReference type="NCBIfam" id="TIGR00091">
    <property type="entry name" value="tRNA (guanosine(46)-N7)-methyltransferase TrmB"/>
    <property type="match status" value="1"/>
</dbReference>
<dbReference type="PANTHER" id="PTHR23417">
    <property type="entry name" value="3-DEOXY-D-MANNO-OCTULOSONIC-ACID TRANSFERASE/TRNA GUANINE-N 7 - -METHYLTRANSFERASE"/>
    <property type="match status" value="1"/>
</dbReference>
<dbReference type="PANTHER" id="PTHR23417:SF14">
    <property type="entry name" value="PENTACOTRIPEPTIDE-REPEAT REGION OF PRORP DOMAIN-CONTAINING PROTEIN"/>
    <property type="match status" value="1"/>
</dbReference>
<dbReference type="Pfam" id="PF02390">
    <property type="entry name" value="Methyltransf_4"/>
    <property type="match status" value="1"/>
</dbReference>
<dbReference type="SUPFAM" id="SSF53335">
    <property type="entry name" value="S-adenosyl-L-methionine-dependent methyltransferases"/>
    <property type="match status" value="1"/>
</dbReference>
<dbReference type="PROSITE" id="PS51625">
    <property type="entry name" value="SAM_MT_TRMB"/>
    <property type="match status" value="1"/>
</dbReference>
<evidence type="ECO:0000250" key="1"/>
<evidence type="ECO:0000255" key="2">
    <source>
        <dbReference type="HAMAP-Rule" id="MF_01057"/>
    </source>
</evidence>
<evidence type="ECO:0000256" key="3">
    <source>
        <dbReference type="SAM" id="MobiDB-lite"/>
    </source>
</evidence>
<proteinExistence type="inferred from homology"/>
<reference key="1">
    <citation type="journal article" date="2005" name="Proc. Natl. Acad. Sci. U.S.A.">
        <title>Comparison of the complete genome sequences of Pseudomonas syringae pv. syringae B728a and pv. tomato DC3000.</title>
        <authorList>
            <person name="Feil H."/>
            <person name="Feil W.S."/>
            <person name="Chain P."/>
            <person name="Larimer F."/>
            <person name="Dibartolo G."/>
            <person name="Copeland A."/>
            <person name="Lykidis A."/>
            <person name="Trong S."/>
            <person name="Nolan M."/>
            <person name="Goltsman E."/>
            <person name="Thiel J."/>
            <person name="Malfatti S."/>
            <person name="Loper J.E."/>
            <person name="Lapidus A."/>
            <person name="Detter J.C."/>
            <person name="Land M."/>
            <person name="Richardson P.M."/>
            <person name="Kyrpides N.C."/>
            <person name="Ivanova N."/>
            <person name="Lindow S.E."/>
        </authorList>
    </citation>
    <scope>NUCLEOTIDE SEQUENCE [LARGE SCALE GENOMIC DNA]</scope>
    <source>
        <strain>B728a</strain>
    </source>
</reference>
<keyword id="KW-0489">Methyltransferase</keyword>
<keyword id="KW-0949">S-adenosyl-L-methionine</keyword>
<keyword id="KW-0808">Transferase</keyword>
<keyword id="KW-0819">tRNA processing</keyword>
<name>TRMB_PSEU2</name>